<sequence>MNNTDTLEKIIRHQKNKDPAYPFQEHLLMQLCIRANKRMQDNISEFLGAYGINHSVYMVLTTLFTAESHCLSPSEISQKLQFTRTNITRITDFLEKTGYVKRTDSREDRRAKKISLTSEGMFFIQRLTLAQSMYLKEIWGYLTHDEQELFEVINKKLLAHLDDVSS</sequence>
<accession>P62088</accession>
<accession>P42192</accession>
<organism>
    <name type="scientific">Escherichia coli</name>
    <dbReference type="NCBI Taxonomy" id="562"/>
    <lineage>
        <taxon>Bacteria</taxon>
        <taxon>Pseudomonadati</taxon>
        <taxon>Pseudomonadota</taxon>
        <taxon>Gammaproteobacteria</taxon>
        <taxon>Enterobacterales</taxon>
        <taxon>Enterobacteriaceae</taxon>
        <taxon>Escherichia</taxon>
    </lineage>
</organism>
<name>PRSX_ECOLX</name>
<evidence type="ECO:0000255" key="1">
    <source>
        <dbReference type="PROSITE-ProRule" id="PRU00345"/>
    </source>
</evidence>
<evidence type="ECO:0000305" key="2"/>
<gene>
    <name type="primary">prsX</name>
</gene>
<protein>
    <recommendedName>
        <fullName>HTH-type transcriptional regulator PrsX</fullName>
    </recommendedName>
</protein>
<reference key="1">
    <citation type="journal article" date="1992" name="Mol. Microbiol.">
        <title>Horizontal gene transfer of the Escherichia coli pap and prs pili operons as a mechanism for the development of tissue-specific adhesive properties.</title>
        <authorList>
            <person name="Marklund B.-I."/>
            <person name="Tennent J.M."/>
            <person name="Garcia E."/>
            <person name="Hamers A."/>
            <person name="Baga M."/>
            <person name="Lindberg F."/>
            <person name="Gaastra W."/>
            <person name="Normark S."/>
        </authorList>
    </citation>
    <scope>NUCLEOTIDE SEQUENCE [GENOMIC DNA]</scope>
    <source>
        <strain>1442</strain>
    </source>
</reference>
<feature type="chain" id="PRO_0000054380" description="HTH-type transcriptional regulator PrsX">
    <location>
        <begin position="1"/>
        <end position="166"/>
    </location>
</feature>
<feature type="domain" description="HTH marR-type" evidence="1">
    <location>
        <begin position="25"/>
        <end position="159"/>
    </location>
</feature>
<proteinExistence type="predicted"/>
<dbReference type="EMBL" id="X62158">
    <property type="protein sequence ID" value="CAA44090.1"/>
    <property type="molecule type" value="Genomic_DNA"/>
</dbReference>
<dbReference type="PIR" id="S25213">
    <property type="entry name" value="S25213"/>
</dbReference>
<dbReference type="SMR" id="P62088"/>
<dbReference type="OMA" id="HQLEPWE"/>
<dbReference type="GO" id="GO:0005737">
    <property type="term" value="C:cytoplasm"/>
    <property type="evidence" value="ECO:0007669"/>
    <property type="project" value="UniProtKB-SubCell"/>
</dbReference>
<dbReference type="GO" id="GO:0003677">
    <property type="term" value="F:DNA binding"/>
    <property type="evidence" value="ECO:0007669"/>
    <property type="project" value="UniProtKB-KW"/>
</dbReference>
<dbReference type="GO" id="GO:0003700">
    <property type="term" value="F:DNA-binding transcription factor activity"/>
    <property type="evidence" value="ECO:0007669"/>
    <property type="project" value="InterPro"/>
</dbReference>
<dbReference type="Gene3D" id="1.10.10.10">
    <property type="entry name" value="Winged helix-like DNA-binding domain superfamily/Winged helix DNA-binding domain"/>
    <property type="match status" value="1"/>
</dbReference>
<dbReference type="InterPro" id="IPR000835">
    <property type="entry name" value="HTH_MarR-typ"/>
</dbReference>
<dbReference type="InterPro" id="IPR023187">
    <property type="entry name" value="Tscrpt_reg_MarR-type_CS"/>
</dbReference>
<dbReference type="InterPro" id="IPR036388">
    <property type="entry name" value="WH-like_DNA-bd_sf"/>
</dbReference>
<dbReference type="InterPro" id="IPR036390">
    <property type="entry name" value="WH_DNA-bd_sf"/>
</dbReference>
<dbReference type="PANTHER" id="PTHR42756">
    <property type="entry name" value="TRANSCRIPTIONAL REGULATOR, MARR"/>
    <property type="match status" value="1"/>
</dbReference>
<dbReference type="PANTHER" id="PTHR42756:SF1">
    <property type="entry name" value="TRANSCRIPTIONAL REPRESSOR OF EMRAB OPERON"/>
    <property type="match status" value="1"/>
</dbReference>
<dbReference type="Pfam" id="PF01047">
    <property type="entry name" value="MarR"/>
    <property type="match status" value="1"/>
</dbReference>
<dbReference type="PRINTS" id="PR00598">
    <property type="entry name" value="HTHMARR"/>
</dbReference>
<dbReference type="SMART" id="SM00347">
    <property type="entry name" value="HTH_MARR"/>
    <property type="match status" value="1"/>
</dbReference>
<dbReference type="SUPFAM" id="SSF46785">
    <property type="entry name" value="Winged helix' DNA-binding domain"/>
    <property type="match status" value="1"/>
</dbReference>
<dbReference type="PROSITE" id="PS01117">
    <property type="entry name" value="HTH_MARR_1"/>
    <property type="match status" value="1"/>
</dbReference>
<dbReference type="PROSITE" id="PS50995">
    <property type="entry name" value="HTH_MARR_2"/>
    <property type="match status" value="1"/>
</dbReference>
<comment type="subcellular location">
    <subcellularLocation>
        <location evidence="2">Cytoplasm</location>
    </subcellularLocation>
</comment>
<keyword id="KW-0963">Cytoplasm</keyword>
<keyword id="KW-0238">DNA-binding</keyword>
<keyword id="KW-0804">Transcription</keyword>
<keyword id="KW-0805">Transcription regulation</keyword>